<feature type="chain" id="PRO_0000312397" description="NADH-ubiquinone oxidoreductase subunit 9">
    <location>
        <begin position="1"/>
        <end position="209"/>
    </location>
</feature>
<sequence length="209" mass="24881">MKDYKNELKVKVDLGENLRGSIPGLIKKVMYKTQYLEIQVEKKNLLPVLRFLKESSKYQCTMLLDIVCIDCLNIEEIKIGRFKIIYVLNSIYNNTRVHISTYVENNGIIETTSGLFESSVWLEREIWDMFGIYFEKHPDLRRILTDYGFVGYPLKKDFPITGYLEVYYDVADKKIIYKPIELMQEYRNYNFGAVWGDYERKVYLENIIK</sequence>
<geneLocation type="mitochondrion"/>
<name>NDUS3_DICCI</name>
<gene>
    <name type="primary">nad9</name>
    <name type="synonym">ndufs3</name>
</gene>
<reference key="1">
    <citation type="journal article" date="2008" name="Mol. Biol. Evol.">
        <title>Mitochondrial genome evolution in the social amoebae.</title>
        <authorList>
            <person name="Heidel A.J."/>
            <person name="Gloeckner G."/>
        </authorList>
    </citation>
    <scope>NUCLEOTIDE SEQUENCE [LARGE SCALE GENOMIC DNA]</scope>
</reference>
<evidence type="ECO:0000250" key="1"/>
<evidence type="ECO:0000305" key="2"/>
<protein>
    <recommendedName>
        <fullName>NADH-ubiquinone oxidoreductase subunit 9</fullName>
        <ecNumber>7.1.1.2</ecNumber>
    </recommendedName>
</protein>
<organism>
    <name type="scientific">Dictyostelium citrinum</name>
    <name type="common">Slime mold</name>
    <dbReference type="NCBI Taxonomy" id="361072"/>
    <lineage>
        <taxon>Eukaryota</taxon>
        <taxon>Amoebozoa</taxon>
        <taxon>Evosea</taxon>
        <taxon>Eumycetozoa</taxon>
        <taxon>Dictyostelia</taxon>
        <taxon>Dictyosteliales</taxon>
        <taxon>Dictyosteliaceae</taxon>
        <taxon>Dictyostelium</taxon>
    </lineage>
</organism>
<accession>Q2LCR4</accession>
<comment type="function">
    <text evidence="1">Core subunit of the mitochondrial membrane respiratory chain NADH dehydrogenase (Complex I) that is believed to belong to the minimal assembly required for catalysis. Complex I functions in the transfer of electrons from NADH to the respiratory chain. The immediate electron acceptor for the enzyme is believed to be ubiquinone (By similarity).</text>
</comment>
<comment type="catalytic activity">
    <reaction>
        <text>a ubiquinone + NADH + 5 H(+)(in) = a ubiquinol + NAD(+) + 4 H(+)(out)</text>
        <dbReference type="Rhea" id="RHEA:29091"/>
        <dbReference type="Rhea" id="RHEA-COMP:9565"/>
        <dbReference type="Rhea" id="RHEA-COMP:9566"/>
        <dbReference type="ChEBI" id="CHEBI:15378"/>
        <dbReference type="ChEBI" id="CHEBI:16389"/>
        <dbReference type="ChEBI" id="CHEBI:17976"/>
        <dbReference type="ChEBI" id="CHEBI:57540"/>
        <dbReference type="ChEBI" id="CHEBI:57945"/>
        <dbReference type="EC" id="7.1.1.2"/>
    </reaction>
</comment>
<comment type="subunit">
    <text>Complex I is composed of about 30 different subunits.</text>
</comment>
<comment type="subcellular location">
    <subcellularLocation>
        <location evidence="1">Mitochondrion inner membrane</location>
    </subcellularLocation>
</comment>
<comment type="similarity">
    <text evidence="2">Belongs to the complex I 30 kDa subunit family.</text>
</comment>
<proteinExistence type="inferred from homology"/>
<dbReference type="EC" id="7.1.1.2"/>
<dbReference type="EMBL" id="DQ336395">
    <property type="protein sequence ID" value="ABC60379.1"/>
    <property type="molecule type" value="Genomic_DNA"/>
</dbReference>
<dbReference type="RefSeq" id="YP_492628.1">
    <property type="nucleotide sequence ID" value="NC_007787.2"/>
</dbReference>
<dbReference type="SMR" id="Q2LCR4"/>
<dbReference type="GeneID" id="3912610"/>
<dbReference type="GO" id="GO:0005743">
    <property type="term" value="C:mitochondrial inner membrane"/>
    <property type="evidence" value="ECO:0007669"/>
    <property type="project" value="UniProtKB-SubCell"/>
</dbReference>
<dbReference type="GO" id="GO:0008137">
    <property type="term" value="F:NADH dehydrogenase (ubiquinone) activity"/>
    <property type="evidence" value="ECO:0007669"/>
    <property type="project" value="UniProtKB-EC"/>
</dbReference>
<dbReference type="Gene3D" id="3.30.460.80">
    <property type="entry name" value="NADH:ubiquinone oxidoreductase, 30kDa subunit"/>
    <property type="match status" value="1"/>
</dbReference>
<dbReference type="HAMAP" id="MF_01357">
    <property type="entry name" value="NDH1_NuoC"/>
    <property type="match status" value="1"/>
</dbReference>
<dbReference type="InterPro" id="IPR010218">
    <property type="entry name" value="NADH_DH_suC"/>
</dbReference>
<dbReference type="InterPro" id="IPR037232">
    <property type="entry name" value="NADH_quin_OxRdtase_su_C/D-like"/>
</dbReference>
<dbReference type="InterPro" id="IPR001268">
    <property type="entry name" value="NADH_UbQ_OxRdtase_30kDa_su"/>
</dbReference>
<dbReference type="InterPro" id="IPR020396">
    <property type="entry name" value="NADH_UbQ_OxRdtase_CS"/>
</dbReference>
<dbReference type="PANTHER" id="PTHR10884:SF14">
    <property type="entry name" value="NADH DEHYDROGENASE [UBIQUINONE] IRON-SULFUR PROTEIN 3, MITOCHONDRIAL"/>
    <property type="match status" value="1"/>
</dbReference>
<dbReference type="PANTHER" id="PTHR10884">
    <property type="entry name" value="NADH DEHYDROGENASE UBIQUINONE IRON-SULFUR PROTEIN 3"/>
    <property type="match status" value="1"/>
</dbReference>
<dbReference type="Pfam" id="PF00329">
    <property type="entry name" value="Complex1_30kDa"/>
    <property type="match status" value="1"/>
</dbReference>
<dbReference type="SUPFAM" id="SSF143243">
    <property type="entry name" value="Nqo5-like"/>
    <property type="match status" value="1"/>
</dbReference>
<dbReference type="PROSITE" id="PS00542">
    <property type="entry name" value="COMPLEX1_30K"/>
    <property type="match status" value="1"/>
</dbReference>
<keyword id="KW-0249">Electron transport</keyword>
<keyword id="KW-0472">Membrane</keyword>
<keyword id="KW-0496">Mitochondrion</keyword>
<keyword id="KW-0999">Mitochondrion inner membrane</keyword>
<keyword id="KW-0520">NAD</keyword>
<keyword id="KW-0560">Oxidoreductase</keyword>
<keyword id="KW-0679">Respiratory chain</keyword>
<keyword id="KW-1278">Translocase</keyword>
<keyword id="KW-0813">Transport</keyword>
<keyword id="KW-0830">Ubiquinone</keyword>